<comment type="function">
    <text evidence="1">Involved in the biosynthesis of branched-chain amino acids (BCAA). Catalyzes an alkyl-migration followed by a ketol-acid reduction of (S)-2-acetolactate (S2AL) to yield (R)-2,3-dihydroxy-isovalerate. In the isomerase reaction, S2AL is rearranged via a Mg-dependent methyl migration to produce 3-hydroxy-3-methyl-2-ketobutyrate (HMKB). In the reductase reaction, this 2-ketoacid undergoes a metal-dependent reduction by NADPH to yield (R)-2,3-dihydroxy-isovalerate.</text>
</comment>
<comment type="catalytic activity">
    <reaction evidence="1">
        <text>(2R)-2,3-dihydroxy-3-methylbutanoate + NADP(+) = (2S)-2-acetolactate + NADPH + H(+)</text>
        <dbReference type="Rhea" id="RHEA:22068"/>
        <dbReference type="ChEBI" id="CHEBI:15378"/>
        <dbReference type="ChEBI" id="CHEBI:49072"/>
        <dbReference type="ChEBI" id="CHEBI:57783"/>
        <dbReference type="ChEBI" id="CHEBI:58349"/>
        <dbReference type="ChEBI" id="CHEBI:58476"/>
        <dbReference type="EC" id="1.1.1.86"/>
    </reaction>
</comment>
<comment type="catalytic activity">
    <reaction evidence="1">
        <text>(2R,3R)-2,3-dihydroxy-3-methylpentanoate + NADP(+) = (S)-2-ethyl-2-hydroxy-3-oxobutanoate + NADPH + H(+)</text>
        <dbReference type="Rhea" id="RHEA:13493"/>
        <dbReference type="ChEBI" id="CHEBI:15378"/>
        <dbReference type="ChEBI" id="CHEBI:49256"/>
        <dbReference type="ChEBI" id="CHEBI:49258"/>
        <dbReference type="ChEBI" id="CHEBI:57783"/>
        <dbReference type="ChEBI" id="CHEBI:58349"/>
        <dbReference type="EC" id="1.1.1.86"/>
    </reaction>
</comment>
<comment type="cofactor">
    <cofactor evidence="1">
        <name>Mg(2+)</name>
        <dbReference type="ChEBI" id="CHEBI:18420"/>
    </cofactor>
    <text evidence="1">Binds 2 magnesium ions per subunit.</text>
</comment>
<comment type="pathway">
    <text evidence="1">Amino-acid biosynthesis; L-isoleucine biosynthesis; L-isoleucine from 2-oxobutanoate: step 2/4.</text>
</comment>
<comment type="pathway">
    <text evidence="1">Amino-acid biosynthesis; L-valine biosynthesis; L-valine from pyruvate: step 2/4.</text>
</comment>
<comment type="similarity">
    <text evidence="1">Belongs to the ketol-acid reductoisomerase family.</text>
</comment>
<sequence length="333" mass="36058">MFYDDDADLTIIQGRKVGVIGYGSQGHAHSLSLRDSGVQVKVGLKEGSKSRAKVSEQGLDVDTPAAVAKWADVIMLLAPDTAQADIFKNDIEPNLSDGDALFFGHGLNIHFGLIKPPAEVTVAMVAPKGPGHLVRRQFVDGKGVPCLIAVDQDPTGKGEALALSYAKAIGGTRAGVIKTTFKDETETDLFGEQAVLCGGTEELVKAGFDVMVESGYPPEMAYFEVLHELKLIVDLMYEGGIARMNYSVSDTAEFGGYLSGPRVIDAGTKDRMREILRDIQNGDFVKKLVANVEGGNKQLEQLRKENVEHPIEVVGKRLRDLMSWVDRPITETA</sequence>
<proteinExistence type="inferred from homology"/>
<organism>
    <name type="scientific">Mycobacterium avium</name>
    <dbReference type="NCBI Taxonomy" id="1764"/>
    <lineage>
        <taxon>Bacteria</taxon>
        <taxon>Bacillati</taxon>
        <taxon>Actinomycetota</taxon>
        <taxon>Actinomycetes</taxon>
        <taxon>Mycobacteriales</taxon>
        <taxon>Mycobacteriaceae</taxon>
        <taxon>Mycobacterium</taxon>
        <taxon>Mycobacterium avium complex (MAC)</taxon>
    </lineage>
</organism>
<reference key="1">
    <citation type="journal article" date="1996" name="Gene">
        <title>Cloning and sequencing of the ilvBNC gene cluster from Mycobacterium avium.</title>
        <authorList>
            <person name="Gusberti L."/>
            <person name="Cantoni R."/>
            <person name="de Rossi E."/>
            <person name="Branzoni M."/>
            <person name="Riccardi G."/>
        </authorList>
    </citation>
    <scope>NUCLEOTIDE SEQUENCE [GENOMIC DNA]</scope>
</reference>
<protein>
    <recommendedName>
        <fullName evidence="1">Ketol-acid reductoisomerase (NADP(+))</fullName>
        <shortName evidence="1">KARI</shortName>
        <ecNumber evidence="1">1.1.1.86</ecNumber>
    </recommendedName>
    <alternativeName>
        <fullName evidence="1">Acetohydroxy-acid isomeroreductase</fullName>
        <shortName evidence="1">AHIR</shortName>
    </alternativeName>
    <alternativeName>
        <fullName evidence="1">Alpha-keto-beta-hydroxylacyl reductoisomerase</fullName>
    </alternativeName>
    <alternativeName>
        <fullName evidence="1">Ketol-acid reductoisomerase type 1</fullName>
    </alternativeName>
    <alternativeName>
        <fullName evidence="1">Ketol-acid reductoisomerase type I</fullName>
    </alternativeName>
</protein>
<gene>
    <name evidence="1" type="primary">ilvC</name>
</gene>
<feature type="chain" id="PRO_0000151326" description="Ketol-acid reductoisomerase (NADP(+))">
    <location>
        <begin position="1"/>
        <end position="333"/>
    </location>
</feature>
<feature type="domain" description="KARI N-terminal Rossmann" evidence="2">
    <location>
        <begin position="1"/>
        <end position="179"/>
    </location>
</feature>
<feature type="domain" description="KARI C-terminal knotted" evidence="3">
    <location>
        <begin position="180"/>
        <end position="325"/>
    </location>
</feature>
<feature type="active site" evidence="1">
    <location>
        <position position="105"/>
    </location>
</feature>
<feature type="binding site" evidence="1">
    <location>
        <begin position="22"/>
        <end position="25"/>
    </location>
    <ligand>
        <name>NADP(+)</name>
        <dbReference type="ChEBI" id="CHEBI:58349"/>
    </ligand>
</feature>
<feature type="binding site" evidence="1">
    <location>
        <position position="45"/>
    </location>
    <ligand>
        <name>NADP(+)</name>
        <dbReference type="ChEBI" id="CHEBI:58349"/>
    </ligand>
</feature>
<feature type="binding site" evidence="1">
    <location>
        <position position="48"/>
    </location>
    <ligand>
        <name>NADP(+)</name>
        <dbReference type="ChEBI" id="CHEBI:58349"/>
    </ligand>
</feature>
<feature type="binding site" evidence="1">
    <location>
        <position position="50"/>
    </location>
    <ligand>
        <name>NADP(+)</name>
        <dbReference type="ChEBI" id="CHEBI:58349"/>
    </ligand>
</feature>
<feature type="binding site" evidence="1">
    <location>
        <begin position="80"/>
        <end position="83"/>
    </location>
    <ligand>
        <name>NADP(+)</name>
        <dbReference type="ChEBI" id="CHEBI:58349"/>
    </ligand>
</feature>
<feature type="binding site" evidence="1">
    <location>
        <position position="131"/>
    </location>
    <ligand>
        <name>NADP(+)</name>
        <dbReference type="ChEBI" id="CHEBI:58349"/>
    </ligand>
</feature>
<feature type="binding site" evidence="1">
    <location>
        <position position="188"/>
    </location>
    <ligand>
        <name>Mg(2+)</name>
        <dbReference type="ChEBI" id="CHEBI:18420"/>
        <label>1</label>
    </ligand>
</feature>
<feature type="binding site" evidence="1">
    <location>
        <position position="188"/>
    </location>
    <ligand>
        <name>Mg(2+)</name>
        <dbReference type="ChEBI" id="CHEBI:18420"/>
        <label>2</label>
    </ligand>
</feature>
<feature type="binding site" evidence="1">
    <location>
        <position position="192"/>
    </location>
    <ligand>
        <name>Mg(2+)</name>
        <dbReference type="ChEBI" id="CHEBI:18420"/>
        <label>1</label>
    </ligand>
</feature>
<feature type="binding site" evidence="1">
    <location>
        <position position="224"/>
    </location>
    <ligand>
        <name>Mg(2+)</name>
        <dbReference type="ChEBI" id="CHEBI:18420"/>
        <label>2</label>
    </ligand>
</feature>
<feature type="binding site" evidence="1">
    <location>
        <position position="228"/>
    </location>
    <ligand>
        <name>Mg(2+)</name>
        <dbReference type="ChEBI" id="CHEBI:18420"/>
        <label>2</label>
    </ligand>
</feature>
<feature type="binding site" evidence="1">
    <location>
        <position position="249"/>
    </location>
    <ligand>
        <name>substrate</name>
    </ligand>
</feature>
<keyword id="KW-0028">Amino-acid biosynthesis</keyword>
<keyword id="KW-0100">Branched-chain amino acid biosynthesis</keyword>
<keyword id="KW-0460">Magnesium</keyword>
<keyword id="KW-0479">Metal-binding</keyword>
<keyword id="KW-0521">NADP</keyword>
<keyword id="KW-0560">Oxidoreductase</keyword>
<accession>Q59500</accession>
<evidence type="ECO:0000255" key="1">
    <source>
        <dbReference type="HAMAP-Rule" id="MF_00435"/>
    </source>
</evidence>
<evidence type="ECO:0000255" key="2">
    <source>
        <dbReference type="PROSITE-ProRule" id="PRU01197"/>
    </source>
</evidence>
<evidence type="ECO:0000255" key="3">
    <source>
        <dbReference type="PROSITE-ProRule" id="PRU01198"/>
    </source>
</evidence>
<dbReference type="EC" id="1.1.1.86" evidence="1"/>
<dbReference type="EMBL" id="L49392">
    <property type="protein sequence ID" value="AAB38428.1"/>
    <property type="molecule type" value="Genomic_DNA"/>
</dbReference>
<dbReference type="PIR" id="JC5166">
    <property type="entry name" value="JC5166"/>
</dbReference>
<dbReference type="SMR" id="Q59500"/>
<dbReference type="UniPathway" id="UPA00047">
    <property type="reaction ID" value="UER00056"/>
</dbReference>
<dbReference type="UniPathway" id="UPA00049">
    <property type="reaction ID" value="UER00060"/>
</dbReference>
<dbReference type="GO" id="GO:0005829">
    <property type="term" value="C:cytosol"/>
    <property type="evidence" value="ECO:0007669"/>
    <property type="project" value="TreeGrafter"/>
</dbReference>
<dbReference type="GO" id="GO:0004455">
    <property type="term" value="F:ketol-acid reductoisomerase activity"/>
    <property type="evidence" value="ECO:0007669"/>
    <property type="project" value="UniProtKB-UniRule"/>
</dbReference>
<dbReference type="GO" id="GO:0000287">
    <property type="term" value="F:magnesium ion binding"/>
    <property type="evidence" value="ECO:0007669"/>
    <property type="project" value="UniProtKB-UniRule"/>
</dbReference>
<dbReference type="GO" id="GO:0050661">
    <property type="term" value="F:NADP binding"/>
    <property type="evidence" value="ECO:0007669"/>
    <property type="project" value="InterPro"/>
</dbReference>
<dbReference type="GO" id="GO:0009097">
    <property type="term" value="P:isoleucine biosynthetic process"/>
    <property type="evidence" value="ECO:0007669"/>
    <property type="project" value="UniProtKB-UniRule"/>
</dbReference>
<dbReference type="GO" id="GO:0009099">
    <property type="term" value="P:L-valine biosynthetic process"/>
    <property type="evidence" value="ECO:0007669"/>
    <property type="project" value="UniProtKB-UniRule"/>
</dbReference>
<dbReference type="FunFam" id="3.40.50.720:FF:000023">
    <property type="entry name" value="Ketol-acid reductoisomerase (NADP(+))"/>
    <property type="match status" value="1"/>
</dbReference>
<dbReference type="Gene3D" id="6.10.240.10">
    <property type="match status" value="1"/>
</dbReference>
<dbReference type="Gene3D" id="3.40.50.720">
    <property type="entry name" value="NAD(P)-binding Rossmann-like Domain"/>
    <property type="match status" value="1"/>
</dbReference>
<dbReference type="HAMAP" id="MF_00435">
    <property type="entry name" value="IlvC"/>
    <property type="match status" value="1"/>
</dbReference>
<dbReference type="InterPro" id="IPR008927">
    <property type="entry name" value="6-PGluconate_DH-like_C_sf"/>
</dbReference>
<dbReference type="InterPro" id="IPR013023">
    <property type="entry name" value="KARI"/>
</dbReference>
<dbReference type="InterPro" id="IPR000506">
    <property type="entry name" value="KARI_C"/>
</dbReference>
<dbReference type="InterPro" id="IPR013116">
    <property type="entry name" value="KARI_N"/>
</dbReference>
<dbReference type="InterPro" id="IPR014359">
    <property type="entry name" value="KARI_prok"/>
</dbReference>
<dbReference type="InterPro" id="IPR036291">
    <property type="entry name" value="NAD(P)-bd_dom_sf"/>
</dbReference>
<dbReference type="NCBIfam" id="TIGR00465">
    <property type="entry name" value="ilvC"/>
    <property type="match status" value="1"/>
</dbReference>
<dbReference type="NCBIfam" id="NF004017">
    <property type="entry name" value="PRK05479.1"/>
    <property type="match status" value="1"/>
</dbReference>
<dbReference type="NCBIfam" id="NF009940">
    <property type="entry name" value="PRK13403.1"/>
    <property type="match status" value="1"/>
</dbReference>
<dbReference type="PANTHER" id="PTHR21371">
    <property type="entry name" value="KETOL-ACID REDUCTOISOMERASE, MITOCHONDRIAL"/>
    <property type="match status" value="1"/>
</dbReference>
<dbReference type="PANTHER" id="PTHR21371:SF1">
    <property type="entry name" value="KETOL-ACID REDUCTOISOMERASE, MITOCHONDRIAL"/>
    <property type="match status" value="1"/>
</dbReference>
<dbReference type="Pfam" id="PF01450">
    <property type="entry name" value="KARI_C"/>
    <property type="match status" value="1"/>
</dbReference>
<dbReference type="Pfam" id="PF07991">
    <property type="entry name" value="KARI_N"/>
    <property type="match status" value="1"/>
</dbReference>
<dbReference type="PIRSF" id="PIRSF000116">
    <property type="entry name" value="IlvC_gammaproteo"/>
    <property type="match status" value="1"/>
</dbReference>
<dbReference type="SUPFAM" id="SSF48179">
    <property type="entry name" value="6-phosphogluconate dehydrogenase C-terminal domain-like"/>
    <property type="match status" value="1"/>
</dbReference>
<dbReference type="SUPFAM" id="SSF51735">
    <property type="entry name" value="NAD(P)-binding Rossmann-fold domains"/>
    <property type="match status" value="1"/>
</dbReference>
<dbReference type="PROSITE" id="PS51851">
    <property type="entry name" value="KARI_C"/>
    <property type="match status" value="1"/>
</dbReference>
<dbReference type="PROSITE" id="PS51850">
    <property type="entry name" value="KARI_N"/>
    <property type="match status" value="1"/>
</dbReference>
<name>ILVC_MYCAV</name>